<sequence>MATIKDVAKRANVSTTTVSHVINKTRFVAEETRNAVWAAIKELHYSPSAVARSLKVNHTKSIGLLATSSEAAYFAEIIEAVEKNCFQKGYTLILGNAWNNLEKQRAYLSMMAQKRVDGLLVMCSEYPEPLLAMLEEYRHIPMVVMDWGEAKADFTDAVIDNAFEGGYMAGRYLIERGHREIGVIPGPLERNTGAGRLAGFMKAMEEAMIKVPESWIVQGDFEPESGYRAMQQILSQSHRPTAVFCGGDIMAMGALCAADEMGLRVPQDVSLIGYDNVRNARYFTPALTTIHQPKDSLGETAFNMLLDRIVNKREEPQSIEVHPRLIERRSVADGPFRDYRR</sequence>
<accession>Q0THG9</accession>
<feature type="chain" id="PRO_0000279658" description="HTH-type transcriptional repressor PurR">
    <location>
        <begin position="1"/>
        <end position="341"/>
    </location>
</feature>
<feature type="domain" description="HTH lacI-type" evidence="1">
    <location>
        <begin position="2"/>
        <end position="56"/>
    </location>
</feature>
<feature type="DNA-binding region" description="H-T-H motif" evidence="1">
    <location>
        <begin position="4"/>
        <end position="23"/>
    </location>
</feature>
<feature type="DNA-binding region" evidence="1">
    <location>
        <begin position="48"/>
        <end position="56"/>
    </location>
</feature>
<feature type="binding site" evidence="1">
    <location>
        <position position="73"/>
    </location>
    <ligand>
        <name>hypoxanthine</name>
        <dbReference type="ChEBI" id="CHEBI:17368"/>
    </ligand>
</feature>
<feature type="binding site" evidence="1">
    <location>
        <position position="190"/>
    </location>
    <ligand>
        <name>hypoxanthine</name>
        <dbReference type="ChEBI" id="CHEBI:17368"/>
    </ligand>
</feature>
<feature type="binding site" evidence="1">
    <location>
        <position position="192"/>
    </location>
    <ligand>
        <name>hypoxanthine</name>
        <dbReference type="ChEBI" id="CHEBI:17368"/>
    </ligand>
</feature>
<feature type="binding site" evidence="1">
    <location>
        <position position="221"/>
    </location>
    <ligand>
        <name>hypoxanthine</name>
        <dbReference type="ChEBI" id="CHEBI:17368"/>
    </ligand>
</feature>
<feature type="binding site" evidence="1">
    <location>
        <position position="275"/>
    </location>
    <ligand>
        <name>hypoxanthine</name>
        <dbReference type="ChEBI" id="CHEBI:17368"/>
    </ligand>
</feature>
<name>PURR_ECOL5</name>
<organism>
    <name type="scientific">Escherichia coli O6:K15:H31 (strain 536 / UPEC)</name>
    <dbReference type="NCBI Taxonomy" id="362663"/>
    <lineage>
        <taxon>Bacteria</taxon>
        <taxon>Pseudomonadati</taxon>
        <taxon>Pseudomonadota</taxon>
        <taxon>Gammaproteobacteria</taxon>
        <taxon>Enterobacterales</taxon>
        <taxon>Enterobacteriaceae</taxon>
        <taxon>Escherichia</taxon>
    </lineage>
</organism>
<protein>
    <recommendedName>
        <fullName evidence="1">HTH-type transcriptional repressor PurR</fullName>
    </recommendedName>
    <alternativeName>
        <fullName evidence="1">Pur regulon repressor</fullName>
    </alternativeName>
    <alternativeName>
        <fullName evidence="1">Purine nucleotide synthesis repressor</fullName>
    </alternativeName>
</protein>
<reference key="1">
    <citation type="journal article" date="2006" name="Mol. Microbiol.">
        <title>Role of pathogenicity island-associated integrases in the genome plasticity of uropathogenic Escherichia coli strain 536.</title>
        <authorList>
            <person name="Hochhut B."/>
            <person name="Wilde C."/>
            <person name="Balling G."/>
            <person name="Middendorf B."/>
            <person name="Dobrindt U."/>
            <person name="Brzuszkiewicz E."/>
            <person name="Gottschalk G."/>
            <person name="Carniel E."/>
            <person name="Hacker J."/>
        </authorList>
    </citation>
    <scope>NUCLEOTIDE SEQUENCE [LARGE SCALE GENOMIC DNA]</scope>
    <source>
        <strain>536 / UPEC</strain>
    </source>
</reference>
<gene>
    <name evidence="1" type="primary">purR</name>
    <name type="ordered locus">ECP_1605</name>
</gene>
<proteinExistence type="inferred from homology"/>
<evidence type="ECO:0000255" key="1">
    <source>
        <dbReference type="HAMAP-Rule" id="MF_01277"/>
    </source>
</evidence>
<dbReference type="EMBL" id="CP000247">
    <property type="protein sequence ID" value="ABG69610.1"/>
    <property type="molecule type" value="Genomic_DNA"/>
</dbReference>
<dbReference type="RefSeq" id="WP_000190985.1">
    <property type="nucleotide sequence ID" value="NC_008253.1"/>
</dbReference>
<dbReference type="SMR" id="Q0THG9"/>
<dbReference type="KEGG" id="ecp:ECP_1605"/>
<dbReference type="HOGENOM" id="CLU_037628_6_2_6"/>
<dbReference type="UniPathway" id="UPA00488"/>
<dbReference type="Proteomes" id="UP000009182">
    <property type="component" value="Chromosome"/>
</dbReference>
<dbReference type="GO" id="GO:0003700">
    <property type="term" value="F:DNA-binding transcription factor activity"/>
    <property type="evidence" value="ECO:0007669"/>
    <property type="project" value="TreeGrafter"/>
</dbReference>
<dbReference type="GO" id="GO:0000976">
    <property type="term" value="F:transcription cis-regulatory region binding"/>
    <property type="evidence" value="ECO:0007669"/>
    <property type="project" value="TreeGrafter"/>
</dbReference>
<dbReference type="GO" id="GO:0045892">
    <property type="term" value="P:negative regulation of DNA-templated transcription"/>
    <property type="evidence" value="ECO:0007669"/>
    <property type="project" value="UniProtKB-UniRule"/>
</dbReference>
<dbReference type="GO" id="GO:0006164">
    <property type="term" value="P:purine nucleotide biosynthetic process"/>
    <property type="evidence" value="ECO:0007669"/>
    <property type="project" value="UniProtKB-UniPathway"/>
</dbReference>
<dbReference type="CDD" id="cd01392">
    <property type="entry name" value="HTH_LacI"/>
    <property type="match status" value="1"/>
</dbReference>
<dbReference type="CDD" id="cd06275">
    <property type="entry name" value="PBP1_PurR"/>
    <property type="match status" value="1"/>
</dbReference>
<dbReference type="FunFam" id="1.10.260.40:FF:000002">
    <property type="entry name" value="HTH-type transcriptional repressor PurR"/>
    <property type="match status" value="1"/>
</dbReference>
<dbReference type="FunFam" id="3.40.50.2300:FF:000045">
    <property type="entry name" value="HTH-type transcriptional repressor PurR"/>
    <property type="match status" value="1"/>
</dbReference>
<dbReference type="Gene3D" id="3.40.50.2300">
    <property type="match status" value="2"/>
</dbReference>
<dbReference type="Gene3D" id="1.10.260.40">
    <property type="entry name" value="lambda repressor-like DNA-binding domains"/>
    <property type="match status" value="1"/>
</dbReference>
<dbReference type="HAMAP" id="MF_01277">
    <property type="entry name" value="HTH_type_PurR"/>
    <property type="match status" value="1"/>
</dbReference>
<dbReference type="InterPro" id="IPR000843">
    <property type="entry name" value="HTH_LacI"/>
</dbReference>
<dbReference type="InterPro" id="IPR046335">
    <property type="entry name" value="LacI/GalR-like_sensor"/>
</dbReference>
<dbReference type="InterPro" id="IPR010982">
    <property type="entry name" value="Lambda_DNA-bd_dom_sf"/>
</dbReference>
<dbReference type="InterPro" id="IPR028082">
    <property type="entry name" value="Peripla_BP_I"/>
</dbReference>
<dbReference type="InterPro" id="IPR023588">
    <property type="entry name" value="Tscrpt_reg_HTH_PurR"/>
</dbReference>
<dbReference type="NCBIfam" id="NF007979">
    <property type="entry name" value="PRK10703.1"/>
    <property type="match status" value="1"/>
</dbReference>
<dbReference type="PANTHER" id="PTHR30146:SF148">
    <property type="entry name" value="HTH-TYPE TRANSCRIPTIONAL REPRESSOR PURR-RELATED"/>
    <property type="match status" value="1"/>
</dbReference>
<dbReference type="PANTHER" id="PTHR30146">
    <property type="entry name" value="LACI-RELATED TRANSCRIPTIONAL REPRESSOR"/>
    <property type="match status" value="1"/>
</dbReference>
<dbReference type="Pfam" id="PF00356">
    <property type="entry name" value="LacI"/>
    <property type="match status" value="1"/>
</dbReference>
<dbReference type="Pfam" id="PF13377">
    <property type="entry name" value="Peripla_BP_3"/>
    <property type="match status" value="1"/>
</dbReference>
<dbReference type="PRINTS" id="PR00036">
    <property type="entry name" value="HTHLACI"/>
</dbReference>
<dbReference type="SMART" id="SM00354">
    <property type="entry name" value="HTH_LACI"/>
    <property type="match status" value="1"/>
</dbReference>
<dbReference type="SUPFAM" id="SSF47413">
    <property type="entry name" value="lambda repressor-like DNA-binding domains"/>
    <property type="match status" value="1"/>
</dbReference>
<dbReference type="SUPFAM" id="SSF53822">
    <property type="entry name" value="Periplasmic binding protein-like I"/>
    <property type="match status" value="1"/>
</dbReference>
<dbReference type="PROSITE" id="PS00356">
    <property type="entry name" value="HTH_LACI_1"/>
    <property type="match status" value="1"/>
</dbReference>
<dbReference type="PROSITE" id="PS50932">
    <property type="entry name" value="HTH_LACI_2"/>
    <property type="match status" value="1"/>
</dbReference>
<keyword id="KW-0238">DNA-binding</keyword>
<keyword id="KW-0658">Purine biosynthesis</keyword>
<keyword id="KW-0678">Repressor</keyword>
<keyword id="KW-0804">Transcription</keyword>
<keyword id="KW-0805">Transcription regulation</keyword>
<comment type="function">
    <text evidence="1">Is the main repressor of the genes involved in the de novo synthesis of purine nucleotides, regulating purB, purC, purEK, purF, purHD, purL, purMN and guaBA expression. PurR is allosterically activated to bind its cognate DNA by binding the purine corepressors, hypoxanthine or guanine, thereby effecting transcription repression.</text>
</comment>
<comment type="pathway">
    <text>Purine metabolism; purine nucleotide biosynthesis [regulation].</text>
</comment>
<comment type="subunit">
    <text evidence="1">Homodimer.</text>
</comment>
<comment type="domain">
    <text evidence="1">Consists of two structural and functional domains: an N-terminal DNA-binding domain, approximately the first 60 residues, and a larger C-terminal domain, approximately 280 residues, which imparts the function of corepressor binding and oligomerization.</text>
</comment>